<accession>Q8DI43</accession>
<name>EFG_THEVB</name>
<dbReference type="EMBL" id="BA000039">
    <property type="protein sequence ID" value="BAC09301.1"/>
    <property type="molecule type" value="Genomic_DNA"/>
</dbReference>
<dbReference type="RefSeq" id="NP_682539.1">
    <property type="nucleotide sequence ID" value="NC_004113.1"/>
</dbReference>
<dbReference type="RefSeq" id="WP_011057586.1">
    <property type="nucleotide sequence ID" value="NC_004113.1"/>
</dbReference>
<dbReference type="SMR" id="Q8DI43"/>
<dbReference type="STRING" id="197221.gene:10748353"/>
<dbReference type="EnsemblBacteria" id="BAC09301">
    <property type="protein sequence ID" value="BAC09301"/>
    <property type="gene ID" value="BAC09301"/>
</dbReference>
<dbReference type="KEGG" id="tel:tlr1749"/>
<dbReference type="PATRIC" id="fig|197221.4.peg.1830"/>
<dbReference type="eggNOG" id="COG0480">
    <property type="taxonomic scope" value="Bacteria"/>
</dbReference>
<dbReference type="Proteomes" id="UP000000440">
    <property type="component" value="Chromosome"/>
</dbReference>
<dbReference type="GO" id="GO:0005737">
    <property type="term" value="C:cytoplasm"/>
    <property type="evidence" value="ECO:0007669"/>
    <property type="project" value="UniProtKB-SubCell"/>
</dbReference>
<dbReference type="GO" id="GO:0005525">
    <property type="term" value="F:GTP binding"/>
    <property type="evidence" value="ECO:0007669"/>
    <property type="project" value="UniProtKB-UniRule"/>
</dbReference>
<dbReference type="GO" id="GO:0003924">
    <property type="term" value="F:GTPase activity"/>
    <property type="evidence" value="ECO:0007669"/>
    <property type="project" value="InterPro"/>
</dbReference>
<dbReference type="GO" id="GO:0003746">
    <property type="term" value="F:translation elongation factor activity"/>
    <property type="evidence" value="ECO:0007669"/>
    <property type="project" value="UniProtKB-UniRule"/>
</dbReference>
<dbReference type="GO" id="GO:0032790">
    <property type="term" value="P:ribosome disassembly"/>
    <property type="evidence" value="ECO:0007669"/>
    <property type="project" value="TreeGrafter"/>
</dbReference>
<dbReference type="CDD" id="cd01886">
    <property type="entry name" value="EF-G"/>
    <property type="match status" value="1"/>
</dbReference>
<dbReference type="CDD" id="cd16262">
    <property type="entry name" value="EFG_III"/>
    <property type="match status" value="1"/>
</dbReference>
<dbReference type="CDD" id="cd01434">
    <property type="entry name" value="EFG_mtEFG1_IV"/>
    <property type="match status" value="1"/>
</dbReference>
<dbReference type="CDD" id="cd03713">
    <property type="entry name" value="EFG_mtEFG_C"/>
    <property type="match status" value="1"/>
</dbReference>
<dbReference type="CDD" id="cd04088">
    <property type="entry name" value="EFG_mtEFG_II"/>
    <property type="match status" value="1"/>
</dbReference>
<dbReference type="FunFam" id="2.40.30.10:FF:000006">
    <property type="entry name" value="Elongation factor G"/>
    <property type="match status" value="1"/>
</dbReference>
<dbReference type="FunFam" id="3.30.230.10:FF:000003">
    <property type="entry name" value="Elongation factor G"/>
    <property type="match status" value="1"/>
</dbReference>
<dbReference type="FunFam" id="3.30.70.240:FF:000001">
    <property type="entry name" value="Elongation factor G"/>
    <property type="match status" value="1"/>
</dbReference>
<dbReference type="FunFam" id="3.30.70.870:FF:000001">
    <property type="entry name" value="Elongation factor G"/>
    <property type="match status" value="1"/>
</dbReference>
<dbReference type="FunFam" id="3.40.50.300:FF:000029">
    <property type="entry name" value="Elongation factor G"/>
    <property type="match status" value="1"/>
</dbReference>
<dbReference type="Gene3D" id="3.30.230.10">
    <property type="match status" value="1"/>
</dbReference>
<dbReference type="Gene3D" id="3.30.70.240">
    <property type="match status" value="1"/>
</dbReference>
<dbReference type="Gene3D" id="3.30.70.870">
    <property type="entry name" value="Elongation Factor G (Translational Gtpase), domain 3"/>
    <property type="match status" value="1"/>
</dbReference>
<dbReference type="Gene3D" id="3.40.50.300">
    <property type="entry name" value="P-loop containing nucleotide triphosphate hydrolases"/>
    <property type="match status" value="1"/>
</dbReference>
<dbReference type="Gene3D" id="2.40.30.10">
    <property type="entry name" value="Translation factors"/>
    <property type="match status" value="1"/>
</dbReference>
<dbReference type="HAMAP" id="MF_00054_B">
    <property type="entry name" value="EF_G_EF_2_B"/>
    <property type="match status" value="1"/>
</dbReference>
<dbReference type="InterPro" id="IPR041095">
    <property type="entry name" value="EFG_II"/>
</dbReference>
<dbReference type="InterPro" id="IPR009022">
    <property type="entry name" value="EFG_III"/>
</dbReference>
<dbReference type="InterPro" id="IPR035647">
    <property type="entry name" value="EFG_III/V"/>
</dbReference>
<dbReference type="InterPro" id="IPR047872">
    <property type="entry name" value="EFG_IV"/>
</dbReference>
<dbReference type="InterPro" id="IPR035649">
    <property type="entry name" value="EFG_V"/>
</dbReference>
<dbReference type="InterPro" id="IPR000640">
    <property type="entry name" value="EFG_V-like"/>
</dbReference>
<dbReference type="InterPro" id="IPR004161">
    <property type="entry name" value="EFTu-like_2"/>
</dbReference>
<dbReference type="InterPro" id="IPR031157">
    <property type="entry name" value="G_TR_CS"/>
</dbReference>
<dbReference type="InterPro" id="IPR027417">
    <property type="entry name" value="P-loop_NTPase"/>
</dbReference>
<dbReference type="InterPro" id="IPR020568">
    <property type="entry name" value="Ribosomal_Su5_D2-typ_SF"/>
</dbReference>
<dbReference type="InterPro" id="IPR014721">
    <property type="entry name" value="Ribsml_uS5_D2-typ_fold_subgr"/>
</dbReference>
<dbReference type="InterPro" id="IPR005225">
    <property type="entry name" value="Small_GTP-bd"/>
</dbReference>
<dbReference type="InterPro" id="IPR000795">
    <property type="entry name" value="T_Tr_GTP-bd_dom"/>
</dbReference>
<dbReference type="InterPro" id="IPR009000">
    <property type="entry name" value="Transl_B-barrel_sf"/>
</dbReference>
<dbReference type="InterPro" id="IPR004540">
    <property type="entry name" value="Transl_elong_EFG/EF2"/>
</dbReference>
<dbReference type="InterPro" id="IPR005517">
    <property type="entry name" value="Transl_elong_EFG/EF2_IV"/>
</dbReference>
<dbReference type="NCBIfam" id="TIGR00484">
    <property type="entry name" value="EF-G"/>
    <property type="match status" value="1"/>
</dbReference>
<dbReference type="NCBIfam" id="NF009379">
    <property type="entry name" value="PRK12740.1-3"/>
    <property type="match status" value="1"/>
</dbReference>
<dbReference type="NCBIfam" id="NF009381">
    <property type="entry name" value="PRK12740.1-5"/>
    <property type="match status" value="1"/>
</dbReference>
<dbReference type="NCBIfam" id="NF009891">
    <property type="entry name" value="PRK13351.1-1"/>
    <property type="match status" value="1"/>
</dbReference>
<dbReference type="NCBIfam" id="TIGR00231">
    <property type="entry name" value="small_GTP"/>
    <property type="match status" value="1"/>
</dbReference>
<dbReference type="PANTHER" id="PTHR43261:SF1">
    <property type="entry name" value="RIBOSOME-RELEASING FACTOR 2, MITOCHONDRIAL"/>
    <property type="match status" value="1"/>
</dbReference>
<dbReference type="PANTHER" id="PTHR43261">
    <property type="entry name" value="TRANSLATION ELONGATION FACTOR G-RELATED"/>
    <property type="match status" value="1"/>
</dbReference>
<dbReference type="Pfam" id="PF00679">
    <property type="entry name" value="EFG_C"/>
    <property type="match status" value="1"/>
</dbReference>
<dbReference type="Pfam" id="PF14492">
    <property type="entry name" value="EFG_III"/>
    <property type="match status" value="1"/>
</dbReference>
<dbReference type="Pfam" id="PF03764">
    <property type="entry name" value="EFG_IV"/>
    <property type="match status" value="1"/>
</dbReference>
<dbReference type="Pfam" id="PF00009">
    <property type="entry name" value="GTP_EFTU"/>
    <property type="match status" value="1"/>
</dbReference>
<dbReference type="Pfam" id="PF03144">
    <property type="entry name" value="GTP_EFTU_D2"/>
    <property type="match status" value="1"/>
</dbReference>
<dbReference type="PRINTS" id="PR00315">
    <property type="entry name" value="ELONGATNFCT"/>
</dbReference>
<dbReference type="SMART" id="SM00838">
    <property type="entry name" value="EFG_C"/>
    <property type="match status" value="1"/>
</dbReference>
<dbReference type="SMART" id="SM00889">
    <property type="entry name" value="EFG_IV"/>
    <property type="match status" value="1"/>
</dbReference>
<dbReference type="SUPFAM" id="SSF54980">
    <property type="entry name" value="EF-G C-terminal domain-like"/>
    <property type="match status" value="2"/>
</dbReference>
<dbReference type="SUPFAM" id="SSF52540">
    <property type="entry name" value="P-loop containing nucleoside triphosphate hydrolases"/>
    <property type="match status" value="1"/>
</dbReference>
<dbReference type="SUPFAM" id="SSF54211">
    <property type="entry name" value="Ribosomal protein S5 domain 2-like"/>
    <property type="match status" value="1"/>
</dbReference>
<dbReference type="SUPFAM" id="SSF50447">
    <property type="entry name" value="Translation proteins"/>
    <property type="match status" value="1"/>
</dbReference>
<dbReference type="PROSITE" id="PS00301">
    <property type="entry name" value="G_TR_1"/>
    <property type="match status" value="1"/>
</dbReference>
<dbReference type="PROSITE" id="PS51722">
    <property type="entry name" value="G_TR_2"/>
    <property type="match status" value="1"/>
</dbReference>
<comment type="function">
    <text evidence="1">Catalyzes the GTP-dependent ribosomal translocation step during translation elongation. During this step, the ribosome changes from the pre-translocational (PRE) to the post-translocational (POST) state as the newly formed A-site-bound peptidyl-tRNA and P-site-bound deacylated tRNA move to the P and E sites, respectively. Catalyzes the coordinated movement of the two tRNA molecules, the mRNA and conformational changes in the ribosome.</text>
</comment>
<comment type="subcellular location">
    <subcellularLocation>
        <location evidence="1">Cytoplasm</location>
    </subcellularLocation>
</comment>
<comment type="similarity">
    <text evidence="1">Belongs to the TRAFAC class translation factor GTPase superfamily. Classic translation factor GTPase family. EF-G/EF-2 subfamily.</text>
</comment>
<evidence type="ECO:0000255" key="1">
    <source>
        <dbReference type="HAMAP-Rule" id="MF_00054"/>
    </source>
</evidence>
<keyword id="KW-0963">Cytoplasm</keyword>
<keyword id="KW-0251">Elongation factor</keyword>
<keyword id="KW-0342">GTP-binding</keyword>
<keyword id="KW-0547">Nucleotide-binding</keyword>
<keyword id="KW-0648">Protein biosynthesis</keyword>
<keyword id="KW-1185">Reference proteome</keyword>
<organism>
    <name type="scientific">Thermosynechococcus vestitus (strain NIES-2133 / IAM M-273 / BP-1)</name>
    <dbReference type="NCBI Taxonomy" id="197221"/>
    <lineage>
        <taxon>Bacteria</taxon>
        <taxon>Bacillati</taxon>
        <taxon>Cyanobacteriota</taxon>
        <taxon>Cyanophyceae</taxon>
        <taxon>Acaryochloridales</taxon>
        <taxon>Thermosynechococcaceae</taxon>
        <taxon>Thermosynechococcus</taxon>
    </lineage>
</organism>
<reference key="1">
    <citation type="journal article" date="2002" name="DNA Res.">
        <title>Complete genome structure of the thermophilic cyanobacterium Thermosynechococcus elongatus BP-1.</title>
        <authorList>
            <person name="Nakamura Y."/>
            <person name="Kaneko T."/>
            <person name="Sato S."/>
            <person name="Ikeuchi M."/>
            <person name="Katoh H."/>
            <person name="Sasamoto S."/>
            <person name="Watanabe A."/>
            <person name="Iriguchi M."/>
            <person name="Kawashima K."/>
            <person name="Kimura T."/>
            <person name="Kishida Y."/>
            <person name="Kiyokawa C."/>
            <person name="Kohara M."/>
            <person name="Matsumoto M."/>
            <person name="Matsuno A."/>
            <person name="Nakazaki N."/>
            <person name="Shimpo S."/>
            <person name="Sugimoto M."/>
            <person name="Takeuchi C."/>
            <person name="Yamada M."/>
            <person name="Tabata S."/>
        </authorList>
    </citation>
    <scope>NUCLEOTIDE SEQUENCE [LARGE SCALE GENOMIC DNA]</scope>
    <source>
        <strain>NIES-2133 / IAM M-273 / BP-1</strain>
    </source>
</reference>
<protein>
    <recommendedName>
        <fullName evidence="1">Elongation factor G</fullName>
        <shortName evidence="1">EF-G</shortName>
    </recommendedName>
</protein>
<gene>
    <name evidence="1" type="primary">fusA</name>
    <name type="synonym">fus</name>
    <name type="ordered locus">tlr1749</name>
</gene>
<proteinExistence type="inferred from homology"/>
<sequence length="691" mass="76307">MARTTPLERVRNIGIAAHIDAGKTTTTERILFYSGVVHKIGEVHEGTTVTDWMEQERERGITITAAAISTSWRDHQINIIDTPGHVDFTIEVERSMRVLDGVIAVFCSVGGVQPQSETVWRQADRYSVPRIVFVNKMDRTGANFYKVHDQIRDRLRANAVPIQLPIGAEDQFKGIVDLVRMRAKIYKDDLGKEIEDTEIPAEMTELAQEYRTKLIEAVAETDDALMEKYFEGEELTEEEIRAALRKGTIAGTIVPMLCGSAFKNKGVQLLLDAVVDYLPAPIDIPAIKGRLPDGTEVERAADDDQPLAALAFKIMSDPYGRLTFVRVYSGVLKKGSYVLNATKGKKERISRLIVLKADERIEVDELRAGDLGAALGLKETFTGDTLCDESSPVILESLYIPEPVISVAVEPKTKQDMEKLSKALQALSEEDPTFRVSVDPETNQTVIAGMGELHLEILVDRMQREYKVEANIGQPQVAYRETIRKPVRAEGKFIRQSGGKGQYGHVVIEVEPAEPGTGFEFVSKIVGGVVPKEYIPPAEQGMKEACESGILAGYPVIDLKVTLVDGSYHEVDSSEMAFKIAGSIAIKEAVMKANPVLLEPMMKVEVEVPEEFLGTVMGDLIARRGQIEGQTVENGIAKVTAKVPLERMFGYATDIRSNTQGRGIFSMEFSHYEEVPRNVAEAIIAKNKGNA</sequence>
<feature type="chain" id="PRO_0000091240" description="Elongation factor G">
    <location>
        <begin position="1"/>
        <end position="691"/>
    </location>
</feature>
<feature type="domain" description="tr-type G">
    <location>
        <begin position="8"/>
        <end position="282"/>
    </location>
</feature>
<feature type="binding site" evidence="1">
    <location>
        <begin position="17"/>
        <end position="24"/>
    </location>
    <ligand>
        <name>GTP</name>
        <dbReference type="ChEBI" id="CHEBI:37565"/>
    </ligand>
</feature>
<feature type="binding site" evidence="1">
    <location>
        <begin position="81"/>
        <end position="85"/>
    </location>
    <ligand>
        <name>GTP</name>
        <dbReference type="ChEBI" id="CHEBI:37565"/>
    </ligand>
</feature>
<feature type="binding site" evidence="1">
    <location>
        <begin position="135"/>
        <end position="138"/>
    </location>
    <ligand>
        <name>GTP</name>
        <dbReference type="ChEBI" id="CHEBI:37565"/>
    </ligand>
</feature>